<proteinExistence type="evidence at protein level"/>
<keyword id="KW-0456">Lyase</keyword>
<keyword id="KW-0460">Magnesium</keyword>
<keyword id="KW-0479">Metal-binding</keyword>
<evidence type="ECO:0000250" key="1"/>
<evidence type="ECO:0000269" key="2">
    <source>
    </source>
</evidence>
<evidence type="ECO:0000305" key="3"/>
<accession>J9R5V4</accession>
<protein>
    <recommendedName>
        <fullName>Valerena-4,7(11)-diene synthase</fullName>
        <ecNumber>4.2.3.139</ecNumber>
    </recommendedName>
    <alternativeName>
        <fullName>Terpene synthase 2</fullName>
        <shortName>VoTPS2</shortName>
    </alternativeName>
</protein>
<reference key="1">
    <citation type="journal article" date="2012" name="FEBS J.">
        <title>Enzymatic synthesis of valerena-4,7(11)-diene by a unique sesquiterpene synthase from the valerian plant (Valeriana officinalis).</title>
        <authorList>
            <person name="Pyle B.W."/>
            <person name="Tran H.T."/>
            <person name="Pickel B."/>
            <person name="Haslam T.M."/>
            <person name="Gao Z."/>
            <person name="MacNevin G."/>
            <person name="Vederas J.C."/>
            <person name="Kim S.U."/>
            <person name="Ro D.K."/>
        </authorList>
    </citation>
    <scope>NUCLEOTIDE SEQUENCE [MRNA]</scope>
    <scope>FUNCTION</scope>
    <scope>CATALYTIC ACTIVITY</scope>
    <scope>BIOPHYSICOCHEMICAL PROPERTIES</scope>
    <scope>TISSUE SPECIFICITY</scope>
</reference>
<feature type="chain" id="PRO_0000421726" description="Valerena-4,7(11)-diene synthase">
    <location>
        <begin position="1"/>
        <end position="562"/>
    </location>
</feature>
<feature type="short sequence motif" description="DDXXD motif">
    <location>
        <begin position="314"/>
        <end position="318"/>
    </location>
</feature>
<feature type="binding site" evidence="1">
    <location>
        <position position="314"/>
    </location>
    <ligand>
        <name>Mg(2+)</name>
        <dbReference type="ChEBI" id="CHEBI:18420"/>
        <label>1</label>
    </ligand>
</feature>
<feature type="binding site" evidence="1">
    <location>
        <position position="314"/>
    </location>
    <ligand>
        <name>Mg(2+)</name>
        <dbReference type="ChEBI" id="CHEBI:18420"/>
        <label>2</label>
    </ligand>
</feature>
<feature type="binding site" evidence="1">
    <location>
        <position position="318"/>
    </location>
    <ligand>
        <name>Mg(2+)</name>
        <dbReference type="ChEBI" id="CHEBI:18420"/>
        <label>1</label>
    </ligand>
</feature>
<feature type="binding site" evidence="1">
    <location>
        <position position="318"/>
    </location>
    <ligand>
        <name>Mg(2+)</name>
        <dbReference type="ChEBI" id="CHEBI:18420"/>
        <label>2</label>
    </ligand>
</feature>
<feature type="binding site" evidence="1">
    <location>
        <position position="467"/>
    </location>
    <ligand>
        <name>Mg(2+)</name>
        <dbReference type="ChEBI" id="CHEBI:18420"/>
        <label>3</label>
    </ligand>
</feature>
<sequence>MESCLSFSSPPPTKKNIQEPVRPNAKFHKSVWGNHFLKYASNPEQIDYDADEQHEQLKEELRKKLVVNVTNERVEEQLKLIDAIQRLGVAYHFQREIDAVLNNLLLFRSNKDSDDIYMVSLRFRLLRQQGHNVSCSVFEKFKNIDGRFKDSLRDDVRGLLSLYEATHMRVHKEDILEEALEFTIYELEQVVKLSSNDTLLASEVIHALNMPIRKGLTRIEARHFISVYQHDKSHDETLLKFSKIDFNMLQKLHQRELADLTIWWEKLNVAEKMPYARDRFVECYFWGLGVYFEPQYSRARKMFVKVINLTSLIDDTYDSYGTFDELDLFTDAVKRWNVNETDKLPEYMRPLFMELLNVYNAMEEELKEEGVSYRVEYAKQSMIQIVTAYNDEAIWYHNGYVPTFDEYLKVALISCGYMLLSTISFVGMGVTTVTKPAFDWVTNNPLILIASCTINRLADDKVGHELEQERGHVASGVECYMKHNNATKQEVVIEFNKRISNAWKDINQECLHPLPVPLHLVVRPLYLACFMNVFYKDEDWYTHSNTQMKECINSLLVESVPY</sequence>
<name>TPS2_VALOF</name>
<gene>
    <name type="primary">TPS2</name>
</gene>
<comment type="function">
    <text evidence="2">Catalyzes formation of valerena-4,7(11)-diene, one of the active ingredients responsible for the sedative effect extracted from Valeriana officinalis root.</text>
</comment>
<comment type="catalytic activity">
    <reaction evidence="2">
        <text>(2E,6E)-farnesyl diphosphate = valerena-4,7(11)-diene + diphosphate</text>
        <dbReference type="Rhea" id="RHEA:34467"/>
        <dbReference type="ChEBI" id="CHEBI:33019"/>
        <dbReference type="ChEBI" id="CHEBI:68625"/>
        <dbReference type="ChEBI" id="CHEBI:175763"/>
        <dbReference type="EC" id="4.2.3.139"/>
    </reaction>
</comment>
<comment type="cofactor">
    <cofactor evidence="1">
        <name>Mg(2+)</name>
        <dbReference type="ChEBI" id="CHEBI:18420"/>
    </cofactor>
    <text evidence="1">Binds 3 Mg(2+) ions per subunit.</text>
</comment>
<comment type="biophysicochemical properties">
    <kinetics>
        <KM evidence="2">9.5 uM for farnesyl diphosphate</KM>
        <text>kcat is 0.013 sec(-1) with farnesyl diphosphate as substrate.</text>
    </kinetics>
</comment>
<comment type="tissue specificity">
    <text evidence="2">Predominantly expressed in root.</text>
</comment>
<comment type="similarity">
    <text evidence="3">Belongs to the terpene synthase family.</text>
</comment>
<dbReference type="EC" id="4.2.3.139"/>
<dbReference type="EMBL" id="JQ437840">
    <property type="protein sequence ID" value="AFR42418.1"/>
    <property type="molecule type" value="mRNA"/>
</dbReference>
<dbReference type="SMR" id="J9R5V4"/>
<dbReference type="KEGG" id="ag:AFR42418"/>
<dbReference type="BioCyc" id="MetaCyc:MONOMER-17911"/>
<dbReference type="GO" id="GO:0000287">
    <property type="term" value="F:magnesium ion binding"/>
    <property type="evidence" value="ECO:0007669"/>
    <property type="project" value="InterPro"/>
</dbReference>
<dbReference type="GO" id="GO:0010333">
    <property type="term" value="F:terpene synthase activity"/>
    <property type="evidence" value="ECO:0007669"/>
    <property type="project" value="InterPro"/>
</dbReference>
<dbReference type="GO" id="GO:0102412">
    <property type="term" value="F:valerena-4,7(11)-diene synthase activity"/>
    <property type="evidence" value="ECO:0007669"/>
    <property type="project" value="UniProtKB-EC"/>
</dbReference>
<dbReference type="GO" id="GO:0016102">
    <property type="term" value="P:diterpenoid biosynthetic process"/>
    <property type="evidence" value="ECO:0007669"/>
    <property type="project" value="InterPro"/>
</dbReference>
<dbReference type="CDD" id="cd00684">
    <property type="entry name" value="Terpene_cyclase_plant_C1"/>
    <property type="match status" value="1"/>
</dbReference>
<dbReference type="FunFam" id="1.10.600.10:FF:000007">
    <property type="entry name" value="Isoprene synthase, chloroplastic"/>
    <property type="match status" value="1"/>
</dbReference>
<dbReference type="FunFam" id="1.50.10.130:FF:000001">
    <property type="entry name" value="Isoprene synthase, chloroplastic"/>
    <property type="match status" value="1"/>
</dbReference>
<dbReference type="Gene3D" id="1.10.600.10">
    <property type="entry name" value="Farnesyl Diphosphate Synthase"/>
    <property type="match status" value="1"/>
</dbReference>
<dbReference type="Gene3D" id="1.50.10.130">
    <property type="entry name" value="Terpene synthase, N-terminal domain"/>
    <property type="match status" value="1"/>
</dbReference>
<dbReference type="InterPro" id="IPR008949">
    <property type="entry name" value="Isoprenoid_synthase_dom_sf"/>
</dbReference>
<dbReference type="InterPro" id="IPR034741">
    <property type="entry name" value="Terpene_cyclase-like_1_C"/>
</dbReference>
<dbReference type="InterPro" id="IPR044814">
    <property type="entry name" value="Terpene_cyclase_plant_C1"/>
</dbReference>
<dbReference type="InterPro" id="IPR001906">
    <property type="entry name" value="Terpene_synth_N"/>
</dbReference>
<dbReference type="InterPro" id="IPR036965">
    <property type="entry name" value="Terpene_synth_N_sf"/>
</dbReference>
<dbReference type="InterPro" id="IPR050148">
    <property type="entry name" value="Terpene_synthase-like"/>
</dbReference>
<dbReference type="InterPro" id="IPR005630">
    <property type="entry name" value="Terpene_synthase_metal-bd"/>
</dbReference>
<dbReference type="InterPro" id="IPR008930">
    <property type="entry name" value="Terpenoid_cyclase/PrenylTrfase"/>
</dbReference>
<dbReference type="PANTHER" id="PTHR31225:SF221">
    <property type="entry name" value="(-)-GERMACRENE D SYNTHASE"/>
    <property type="match status" value="1"/>
</dbReference>
<dbReference type="PANTHER" id="PTHR31225">
    <property type="entry name" value="OS04G0344100 PROTEIN-RELATED"/>
    <property type="match status" value="1"/>
</dbReference>
<dbReference type="Pfam" id="PF01397">
    <property type="entry name" value="Terpene_synth"/>
    <property type="match status" value="1"/>
</dbReference>
<dbReference type="Pfam" id="PF03936">
    <property type="entry name" value="Terpene_synth_C"/>
    <property type="match status" value="1"/>
</dbReference>
<dbReference type="SFLD" id="SFLDS00005">
    <property type="entry name" value="Isoprenoid_Synthase_Type_I"/>
    <property type="match status" value="1"/>
</dbReference>
<dbReference type="SFLD" id="SFLDG01019">
    <property type="entry name" value="Terpene_Cyclase_Like_1_C_Termi"/>
    <property type="match status" value="1"/>
</dbReference>
<dbReference type="SUPFAM" id="SSF48239">
    <property type="entry name" value="Terpenoid cyclases/Protein prenyltransferases"/>
    <property type="match status" value="1"/>
</dbReference>
<dbReference type="SUPFAM" id="SSF48576">
    <property type="entry name" value="Terpenoid synthases"/>
    <property type="match status" value="1"/>
</dbReference>
<organism>
    <name type="scientific">Valeriana officinalis</name>
    <name type="common">Valerian</name>
    <name type="synonym">Garden heliotrope</name>
    <dbReference type="NCBI Taxonomy" id="19953"/>
    <lineage>
        <taxon>Eukaryota</taxon>
        <taxon>Viridiplantae</taxon>
        <taxon>Streptophyta</taxon>
        <taxon>Embryophyta</taxon>
        <taxon>Tracheophyta</taxon>
        <taxon>Spermatophyta</taxon>
        <taxon>Magnoliopsida</taxon>
        <taxon>eudicotyledons</taxon>
        <taxon>Gunneridae</taxon>
        <taxon>Pentapetalae</taxon>
        <taxon>asterids</taxon>
        <taxon>campanulids</taxon>
        <taxon>Dipsacales</taxon>
        <taxon>Caprifoliaceae</taxon>
        <taxon>Valeriana</taxon>
    </lineage>
</organism>